<dbReference type="EMBL" id="AJ011706">
    <property type="protein sequence ID" value="CAA09748.1"/>
    <property type="molecule type" value="mRNA"/>
</dbReference>
<dbReference type="SMR" id="O77303"/>
<dbReference type="GO" id="GO:0022627">
    <property type="term" value="C:cytosolic small ribosomal subunit"/>
    <property type="evidence" value="ECO:0007669"/>
    <property type="project" value="TreeGrafter"/>
</dbReference>
<dbReference type="GO" id="GO:0005730">
    <property type="term" value="C:nucleolus"/>
    <property type="evidence" value="ECO:0007669"/>
    <property type="project" value="TreeGrafter"/>
</dbReference>
<dbReference type="GO" id="GO:0070181">
    <property type="term" value="F:small ribosomal subunit rRNA binding"/>
    <property type="evidence" value="ECO:0007669"/>
    <property type="project" value="TreeGrafter"/>
</dbReference>
<dbReference type="GO" id="GO:0003735">
    <property type="term" value="F:structural constituent of ribosome"/>
    <property type="evidence" value="ECO:0007669"/>
    <property type="project" value="InterPro"/>
</dbReference>
<dbReference type="GO" id="GO:0006412">
    <property type="term" value="P:translation"/>
    <property type="evidence" value="ECO:0007669"/>
    <property type="project" value="InterPro"/>
</dbReference>
<dbReference type="CDD" id="cd00353">
    <property type="entry name" value="Ribosomal_S15p_S13e"/>
    <property type="match status" value="1"/>
</dbReference>
<dbReference type="FunFam" id="1.10.287.10:FF:000003">
    <property type="entry name" value="40S ribosomal protein S13"/>
    <property type="match status" value="1"/>
</dbReference>
<dbReference type="FunFam" id="4.10.860.130:FF:000001">
    <property type="entry name" value="40S ribosomal protein S13"/>
    <property type="match status" value="1"/>
</dbReference>
<dbReference type="Gene3D" id="4.10.860.130">
    <property type="match status" value="1"/>
</dbReference>
<dbReference type="Gene3D" id="1.10.287.10">
    <property type="entry name" value="S15/NS1, RNA-binding"/>
    <property type="match status" value="1"/>
</dbReference>
<dbReference type="HAMAP" id="MF_01343_A">
    <property type="entry name" value="Ribosomal_uS15_A"/>
    <property type="match status" value="1"/>
</dbReference>
<dbReference type="InterPro" id="IPR000589">
    <property type="entry name" value="Ribosomal_uS15"/>
</dbReference>
<dbReference type="InterPro" id="IPR023029">
    <property type="entry name" value="Ribosomal_uS15_arc_euk"/>
</dbReference>
<dbReference type="InterPro" id="IPR012606">
    <property type="entry name" value="Ribosomal_uS15_N"/>
</dbReference>
<dbReference type="InterPro" id="IPR009068">
    <property type="entry name" value="uS15_NS1_RNA-bd_sf"/>
</dbReference>
<dbReference type="NCBIfam" id="NF006331">
    <property type="entry name" value="PRK08561.1"/>
    <property type="match status" value="1"/>
</dbReference>
<dbReference type="PANTHER" id="PTHR11885">
    <property type="entry name" value="RIBOSOMAL PROTEIN S15P/S13E"/>
    <property type="match status" value="1"/>
</dbReference>
<dbReference type="PANTHER" id="PTHR11885:SF6">
    <property type="entry name" value="SMALL RIBOSOMAL SUBUNIT PROTEIN US15"/>
    <property type="match status" value="1"/>
</dbReference>
<dbReference type="Pfam" id="PF08069">
    <property type="entry name" value="Ribosomal_S13_N"/>
    <property type="match status" value="1"/>
</dbReference>
<dbReference type="Pfam" id="PF00312">
    <property type="entry name" value="Ribosomal_S15"/>
    <property type="match status" value="1"/>
</dbReference>
<dbReference type="SMART" id="SM01386">
    <property type="entry name" value="Ribosomal_S13_N"/>
    <property type="match status" value="1"/>
</dbReference>
<dbReference type="SMART" id="SM01387">
    <property type="entry name" value="Ribosomal_S15"/>
    <property type="match status" value="1"/>
</dbReference>
<dbReference type="SUPFAM" id="SSF47060">
    <property type="entry name" value="S15/NS1 RNA-binding domain"/>
    <property type="match status" value="1"/>
</dbReference>
<dbReference type="PROSITE" id="PS00362">
    <property type="entry name" value="RIBOSOMAL_S15"/>
    <property type="match status" value="1"/>
</dbReference>
<gene>
    <name type="primary">RPS13</name>
</gene>
<comment type="similarity">
    <text evidence="2">Belongs to the universal ribosomal protein uS15 family.</text>
</comment>
<organism>
    <name type="scientific">Lumbricus rubellus</name>
    <name type="common">Humus earthworm</name>
    <dbReference type="NCBI Taxonomy" id="35632"/>
    <lineage>
        <taxon>Eukaryota</taxon>
        <taxon>Metazoa</taxon>
        <taxon>Spiralia</taxon>
        <taxon>Lophotrochozoa</taxon>
        <taxon>Annelida</taxon>
        <taxon>Clitellata</taxon>
        <taxon>Oligochaeta</taxon>
        <taxon>Crassiclitellata</taxon>
        <taxon>Lumbricina</taxon>
        <taxon>Lumbricidae</taxon>
        <taxon>Lumbricinae</taxon>
        <taxon>Lumbricus</taxon>
    </lineage>
</organism>
<sequence>MGRMHAPGKGISQSALPYRRSVPTWLKLGPDDVKEQIYKLAKKGLTPSQIGVILRDSHGVAQTRHVAGNKILRILKAKGLAPTIPEDLYFLIKKAVAIRKHLERNRKDKDSKFRLILVESRIHRLARYYKTRKVLPPVWKYESATASALVA</sequence>
<feature type="initiator methionine" description="Removed" evidence="1">
    <location>
        <position position="1"/>
    </location>
</feature>
<feature type="chain" id="PRO_0000115673" description="Small ribosomal subunit protein uS15">
    <location>
        <begin position="2"/>
        <end position="151"/>
    </location>
</feature>
<name>RS13_LUMRU</name>
<accession>O77303</accession>
<keyword id="KW-0687">Ribonucleoprotein</keyword>
<keyword id="KW-0689">Ribosomal protein</keyword>
<evidence type="ECO:0000250" key="1"/>
<evidence type="ECO:0000305" key="2"/>
<proteinExistence type="evidence at transcript level"/>
<protein>
    <recommendedName>
        <fullName evidence="2">Small ribosomal subunit protein uS15</fullName>
    </recommendedName>
    <alternativeName>
        <fullName>40S ribosomal protein S13</fullName>
    </alternativeName>
</protein>
<reference key="1">
    <citation type="submission" date="1998-09" db="EMBL/GenBank/DDBJ databases">
        <title>Ribosomal proteins isolated from earthworms native to heavy metal contaminated soil.</title>
        <authorList>
            <person name="Sturzenbaum S.R."/>
            <person name="Morgan A.J."/>
            <person name="Kille P."/>
        </authorList>
    </citation>
    <scope>NUCLEOTIDE SEQUENCE [MRNA]</scope>
</reference>